<protein>
    <recommendedName>
        <fullName evidence="8">Zinc finger protein 64</fullName>
        <shortName>Zfp-64</shortName>
    </recommendedName>
</protein>
<reference key="1">
    <citation type="journal article" date="1997" name="Gene">
        <title>A search for a mammalian homologue of the Drosophila photoreceptor development gene glass yields Zfp64, a zinc finger encoding gene which maps to the distal end of mouse chromosome 2.</title>
        <authorList>
            <person name="Mack H.G."/>
            <person name="Beck F."/>
            <person name="Bowtell D.D."/>
        </authorList>
    </citation>
    <scope>NUCLEOTIDE SEQUENCE [MRNA] (ISOFORM 3)</scope>
    <scope>TISSUE SPECIFICITY</scope>
    <scope>DEVELOPMENTAL STAGE</scope>
    <source>
        <tissue>Fetal eye</tissue>
    </source>
</reference>
<reference key="2">
    <citation type="journal article" date="2005" name="Science">
        <title>The transcriptional landscape of the mammalian genome.</title>
        <authorList>
            <person name="Carninci P."/>
            <person name="Kasukawa T."/>
            <person name="Katayama S."/>
            <person name="Gough J."/>
            <person name="Frith M.C."/>
            <person name="Maeda N."/>
            <person name="Oyama R."/>
            <person name="Ravasi T."/>
            <person name="Lenhard B."/>
            <person name="Wells C."/>
            <person name="Kodzius R."/>
            <person name="Shimokawa K."/>
            <person name="Bajic V.B."/>
            <person name="Brenner S.E."/>
            <person name="Batalov S."/>
            <person name="Forrest A.R."/>
            <person name="Zavolan M."/>
            <person name="Davis M.J."/>
            <person name="Wilming L.G."/>
            <person name="Aidinis V."/>
            <person name="Allen J.E."/>
            <person name="Ambesi-Impiombato A."/>
            <person name="Apweiler R."/>
            <person name="Aturaliya R.N."/>
            <person name="Bailey T.L."/>
            <person name="Bansal M."/>
            <person name="Baxter L."/>
            <person name="Beisel K.W."/>
            <person name="Bersano T."/>
            <person name="Bono H."/>
            <person name="Chalk A.M."/>
            <person name="Chiu K.P."/>
            <person name="Choudhary V."/>
            <person name="Christoffels A."/>
            <person name="Clutterbuck D.R."/>
            <person name="Crowe M.L."/>
            <person name="Dalla E."/>
            <person name="Dalrymple B.P."/>
            <person name="de Bono B."/>
            <person name="Della Gatta G."/>
            <person name="di Bernardo D."/>
            <person name="Down T."/>
            <person name="Engstrom P."/>
            <person name="Fagiolini M."/>
            <person name="Faulkner G."/>
            <person name="Fletcher C.F."/>
            <person name="Fukushima T."/>
            <person name="Furuno M."/>
            <person name="Futaki S."/>
            <person name="Gariboldi M."/>
            <person name="Georgii-Hemming P."/>
            <person name="Gingeras T.R."/>
            <person name="Gojobori T."/>
            <person name="Green R.E."/>
            <person name="Gustincich S."/>
            <person name="Harbers M."/>
            <person name="Hayashi Y."/>
            <person name="Hensch T.K."/>
            <person name="Hirokawa N."/>
            <person name="Hill D."/>
            <person name="Huminiecki L."/>
            <person name="Iacono M."/>
            <person name="Ikeo K."/>
            <person name="Iwama A."/>
            <person name="Ishikawa T."/>
            <person name="Jakt M."/>
            <person name="Kanapin A."/>
            <person name="Katoh M."/>
            <person name="Kawasawa Y."/>
            <person name="Kelso J."/>
            <person name="Kitamura H."/>
            <person name="Kitano H."/>
            <person name="Kollias G."/>
            <person name="Krishnan S.P."/>
            <person name="Kruger A."/>
            <person name="Kummerfeld S.K."/>
            <person name="Kurochkin I.V."/>
            <person name="Lareau L.F."/>
            <person name="Lazarevic D."/>
            <person name="Lipovich L."/>
            <person name="Liu J."/>
            <person name="Liuni S."/>
            <person name="McWilliam S."/>
            <person name="Madan Babu M."/>
            <person name="Madera M."/>
            <person name="Marchionni L."/>
            <person name="Matsuda H."/>
            <person name="Matsuzawa S."/>
            <person name="Miki H."/>
            <person name="Mignone F."/>
            <person name="Miyake S."/>
            <person name="Morris K."/>
            <person name="Mottagui-Tabar S."/>
            <person name="Mulder N."/>
            <person name="Nakano N."/>
            <person name="Nakauchi H."/>
            <person name="Ng P."/>
            <person name="Nilsson R."/>
            <person name="Nishiguchi S."/>
            <person name="Nishikawa S."/>
            <person name="Nori F."/>
            <person name="Ohara O."/>
            <person name="Okazaki Y."/>
            <person name="Orlando V."/>
            <person name="Pang K.C."/>
            <person name="Pavan W.J."/>
            <person name="Pavesi G."/>
            <person name="Pesole G."/>
            <person name="Petrovsky N."/>
            <person name="Piazza S."/>
            <person name="Reed J."/>
            <person name="Reid J.F."/>
            <person name="Ring B.Z."/>
            <person name="Ringwald M."/>
            <person name="Rost B."/>
            <person name="Ruan Y."/>
            <person name="Salzberg S.L."/>
            <person name="Sandelin A."/>
            <person name="Schneider C."/>
            <person name="Schoenbach C."/>
            <person name="Sekiguchi K."/>
            <person name="Semple C.A."/>
            <person name="Seno S."/>
            <person name="Sessa L."/>
            <person name="Sheng Y."/>
            <person name="Shibata Y."/>
            <person name="Shimada H."/>
            <person name="Shimada K."/>
            <person name="Silva D."/>
            <person name="Sinclair B."/>
            <person name="Sperling S."/>
            <person name="Stupka E."/>
            <person name="Sugiura K."/>
            <person name="Sultana R."/>
            <person name="Takenaka Y."/>
            <person name="Taki K."/>
            <person name="Tammoja K."/>
            <person name="Tan S.L."/>
            <person name="Tang S."/>
            <person name="Taylor M.S."/>
            <person name="Tegner J."/>
            <person name="Teichmann S.A."/>
            <person name="Ueda H.R."/>
            <person name="van Nimwegen E."/>
            <person name="Verardo R."/>
            <person name="Wei C.L."/>
            <person name="Yagi K."/>
            <person name="Yamanishi H."/>
            <person name="Zabarovsky E."/>
            <person name="Zhu S."/>
            <person name="Zimmer A."/>
            <person name="Hide W."/>
            <person name="Bult C."/>
            <person name="Grimmond S.M."/>
            <person name="Teasdale R.D."/>
            <person name="Liu E.T."/>
            <person name="Brusic V."/>
            <person name="Quackenbush J."/>
            <person name="Wahlestedt C."/>
            <person name="Mattick J.S."/>
            <person name="Hume D.A."/>
            <person name="Kai C."/>
            <person name="Sasaki D."/>
            <person name="Tomaru Y."/>
            <person name="Fukuda S."/>
            <person name="Kanamori-Katayama M."/>
            <person name="Suzuki M."/>
            <person name="Aoki J."/>
            <person name="Arakawa T."/>
            <person name="Iida J."/>
            <person name="Imamura K."/>
            <person name="Itoh M."/>
            <person name="Kato T."/>
            <person name="Kawaji H."/>
            <person name="Kawagashira N."/>
            <person name="Kawashima T."/>
            <person name="Kojima M."/>
            <person name="Kondo S."/>
            <person name="Konno H."/>
            <person name="Nakano K."/>
            <person name="Ninomiya N."/>
            <person name="Nishio T."/>
            <person name="Okada M."/>
            <person name="Plessy C."/>
            <person name="Shibata K."/>
            <person name="Shiraki T."/>
            <person name="Suzuki S."/>
            <person name="Tagami M."/>
            <person name="Waki K."/>
            <person name="Watahiki A."/>
            <person name="Okamura-Oho Y."/>
            <person name="Suzuki H."/>
            <person name="Kawai J."/>
            <person name="Hayashizaki Y."/>
        </authorList>
    </citation>
    <scope>NUCLEOTIDE SEQUENCE [LARGE SCALE MRNA] (ISOFORM 2)</scope>
    <source>
        <strain>C57BL/6J</strain>
        <tissue>Embryonic stem cell</tissue>
    </source>
</reference>
<reference key="3">
    <citation type="journal article" date="2004" name="Genome Res.">
        <title>The status, quality, and expansion of the NIH full-length cDNA project: the Mammalian Gene Collection (MGC).</title>
        <authorList>
            <consortium name="The MGC Project Team"/>
        </authorList>
    </citation>
    <scope>NUCLEOTIDE SEQUENCE [LARGE SCALE MRNA] (ISOFORM 1)</scope>
    <source>
        <tissue>Mammary tumor</tissue>
    </source>
</reference>
<reference key="4">
    <citation type="journal article" date="2008" name="J. Cell Sci.">
        <title>Zfp64 participates in Notch signaling and regulates differentiation in mesenchymal cells.</title>
        <authorList>
            <person name="Sakamoto K."/>
            <person name="Tamamura Y."/>
            <person name="Katsube K."/>
            <person name="Yamaguchi A."/>
        </authorList>
    </citation>
    <scope>INTERACTION WITH NOTCH1</scope>
    <scope>SUBCELLULAR LOCATION</scope>
    <scope>TISSUE SPECIFICITY</scope>
    <scope>FUNCTION</scope>
</reference>
<evidence type="ECO:0000250" key="1"/>
<evidence type="ECO:0000255" key="2">
    <source>
        <dbReference type="PROSITE-ProRule" id="PRU00042"/>
    </source>
</evidence>
<evidence type="ECO:0000256" key="3">
    <source>
        <dbReference type="SAM" id="MobiDB-lite"/>
    </source>
</evidence>
<evidence type="ECO:0000269" key="4">
    <source>
    </source>
</evidence>
<evidence type="ECO:0000269" key="5">
    <source>
    </source>
</evidence>
<evidence type="ECO:0000303" key="6">
    <source>
    </source>
</evidence>
<evidence type="ECO:0000303" key="7">
    <source>
    </source>
</evidence>
<evidence type="ECO:0000305" key="8"/>
<evidence type="ECO:0000312" key="9">
    <source>
        <dbReference type="MGI" id="MGI:107342"/>
    </source>
</evidence>
<comment type="function">
    <text evidence="4">May be involved in the regulation of mesenchymal cell differentiation through transactivation of NOTCH1 target genes.</text>
</comment>
<comment type="subunit">
    <text evidence="4">Interacts with NOTCH1.</text>
</comment>
<comment type="subcellular location">
    <subcellularLocation>
        <location evidence="4">Nucleus</location>
    </subcellularLocation>
</comment>
<comment type="alternative products">
    <event type="alternative splicing"/>
    <isoform>
        <id>Q99KE8-1</id>
        <name>1</name>
        <sequence type="displayed"/>
    </isoform>
    <isoform>
        <id>Q99KE8-2</id>
        <name>2</name>
        <sequence type="described" ref="VSP_007288 VSP_007289"/>
    </isoform>
    <isoform>
        <id>Q99KE8-3</id>
        <name>3</name>
        <sequence type="described" ref="VSP_007287 VSP_007290 VSP_007291"/>
    </isoform>
</comment>
<comment type="tissue specificity">
    <text evidence="4 5">Widely expressed (PubMed:9034307). Expressed in the brain, spleen, liver, and heart (PubMed:18430783).</text>
</comment>
<comment type="developmental stage">
    <text evidence="5">Expressed from 10.5 dpc.</text>
</comment>
<comment type="similarity">
    <text evidence="8">Belongs to the krueppel C2H2-type zinc-finger protein family.</text>
</comment>
<accession>Q99KE8</accession>
<accession>P97365</accession>
<accession>Q9CWR3</accession>
<sequence>MNASVEGDTFSGSMQIPGGTTVLVELAPDIHICGLCKQHFSNLDAFVAHKQSGCQLTTTPVTAPSTVQFVAEETEPATQTTTTTISSETQTITVSAPEFVFEHGYQTYLPTESTDNQTATVISLPTKSRTKKPTAPPAQKRLGCCYPGCQFKTAYGMKDMERHLKIHTGDKPHKCEVCGKCFSRKDKLKTHMRCHTGVKPYKCKTCDYAAADSSSLNKHLRIHSDERPFKCQICPYASRNSSQLTVHLRSHTASVLENDVQKPAGLPAEESDAQQAPAVTLSLEAKERTATLGERTFNCRYPGCHFKTVHGMKDLDRHLRIHTGDKPHKCEFCDKCFSRKDNLTMHMRCHTSVKPHKCHLCDYAAVDSSSLKKHLRIHSDERPYKCQLCPYASRNSSQLTVHLRSHTGDTPFQCWLCSAKFKISSDLKRHMIVHSGEKPFKCEFCDVRCTMKANLKSHIRIKHTFKCLHCAFQGRDRADLLEHSRLHQADHPEKCPECSYSCSNPAALRVHSRVHCTDRPFKCDFCSFDTKRPSSLAKHIDKVHREGAKTENRAPPGKDGPGESGPHHVPNVSTQRAFGCDKCGASFVRDDSLRCHRKQHSDWGENKNSNLVTFPSEGIATGQLGPLVSVGQLESTLEPSHDL</sequence>
<organism>
    <name type="scientific">Mus musculus</name>
    <name type="common">Mouse</name>
    <dbReference type="NCBI Taxonomy" id="10090"/>
    <lineage>
        <taxon>Eukaryota</taxon>
        <taxon>Metazoa</taxon>
        <taxon>Chordata</taxon>
        <taxon>Craniata</taxon>
        <taxon>Vertebrata</taxon>
        <taxon>Euteleostomi</taxon>
        <taxon>Mammalia</taxon>
        <taxon>Eutheria</taxon>
        <taxon>Euarchontoglires</taxon>
        <taxon>Glires</taxon>
        <taxon>Rodentia</taxon>
        <taxon>Myomorpha</taxon>
        <taxon>Muroidea</taxon>
        <taxon>Muridae</taxon>
        <taxon>Murinae</taxon>
        <taxon>Mus</taxon>
        <taxon>Mus</taxon>
    </lineage>
</organism>
<name>ZFP64_MOUSE</name>
<keyword id="KW-0025">Alternative splicing</keyword>
<keyword id="KW-0217">Developmental protein</keyword>
<keyword id="KW-0238">DNA-binding</keyword>
<keyword id="KW-0479">Metal-binding</keyword>
<keyword id="KW-0539">Nucleus</keyword>
<keyword id="KW-1185">Reference proteome</keyword>
<keyword id="KW-0677">Repeat</keyword>
<keyword id="KW-0804">Transcription</keyword>
<keyword id="KW-0805">Transcription regulation</keyword>
<keyword id="KW-0862">Zinc</keyword>
<keyword id="KW-0863">Zinc-finger</keyword>
<gene>
    <name evidence="9" type="primary">Zfp64</name>
</gene>
<proteinExistence type="evidence at protein level"/>
<feature type="chain" id="PRO_0000047309" description="Zinc finger protein 64">
    <location>
        <begin position="1"/>
        <end position="643"/>
    </location>
</feature>
<feature type="zinc finger region" description="C2H2-type 1" evidence="2">
    <location>
        <begin position="173"/>
        <end position="195"/>
    </location>
</feature>
<feature type="zinc finger region" description="C2H2-type 2" evidence="2">
    <location>
        <begin position="201"/>
        <end position="223"/>
    </location>
</feature>
<feature type="zinc finger region" description="C2H2-type 3" evidence="2">
    <location>
        <begin position="229"/>
        <end position="251"/>
    </location>
</feature>
<feature type="zinc finger region" description="C2H2-type 4" evidence="2">
    <location>
        <begin position="297"/>
        <end position="322"/>
    </location>
</feature>
<feature type="zinc finger region" description="C2H2-type 5" evidence="2">
    <location>
        <begin position="328"/>
        <end position="350"/>
    </location>
</feature>
<feature type="zinc finger region" description="C2H2-type 6" evidence="2">
    <location>
        <begin position="356"/>
        <end position="378"/>
    </location>
</feature>
<feature type="zinc finger region" description="C2H2-type 7" evidence="2">
    <location>
        <begin position="384"/>
        <end position="406"/>
    </location>
</feature>
<feature type="zinc finger region" description="C2H2-type 8" evidence="2">
    <location>
        <begin position="412"/>
        <end position="434"/>
    </location>
</feature>
<feature type="zinc finger region" description="C2H2-type 9" evidence="2">
    <location>
        <begin position="440"/>
        <end position="463"/>
    </location>
</feature>
<feature type="zinc finger region" description="C2H2-type 10" evidence="2">
    <location>
        <begin position="465"/>
        <end position="487"/>
    </location>
</feature>
<feature type="zinc finger region" description="C2H2-type 11" evidence="2">
    <location>
        <begin position="493"/>
        <end position="515"/>
    </location>
</feature>
<feature type="zinc finger region" description="C2H2-type 12" evidence="2">
    <location>
        <begin position="578"/>
        <end position="600"/>
    </location>
</feature>
<feature type="region of interest" description="Disordered" evidence="3">
    <location>
        <begin position="538"/>
        <end position="571"/>
    </location>
</feature>
<feature type="compositionally biased region" description="Basic and acidic residues" evidence="3">
    <location>
        <begin position="538"/>
        <end position="552"/>
    </location>
</feature>
<feature type="binding site" evidence="1">
    <location>
        <position position="495"/>
    </location>
    <ligand>
        <name>Zn(2+)</name>
        <dbReference type="ChEBI" id="CHEBI:29105"/>
        <label>1</label>
    </ligand>
</feature>
<feature type="binding site" evidence="1">
    <location>
        <position position="498"/>
    </location>
    <ligand>
        <name>Zn(2+)</name>
        <dbReference type="ChEBI" id="CHEBI:29105"/>
        <label>1</label>
    </ligand>
</feature>
<feature type="binding site" evidence="1">
    <location>
        <position position="511"/>
    </location>
    <ligand>
        <name>Zn(2+)</name>
        <dbReference type="ChEBI" id="CHEBI:29105"/>
        <label>1</label>
    </ligand>
</feature>
<feature type="binding site" evidence="1">
    <location>
        <position position="515"/>
    </location>
    <ligand>
        <name>Zn(2+)</name>
        <dbReference type="ChEBI" id="CHEBI:29105"/>
        <label>1</label>
    </ligand>
</feature>
<feature type="binding site" evidence="1">
    <location>
        <position position="523"/>
    </location>
    <ligand>
        <name>Zn(2+)</name>
        <dbReference type="ChEBI" id="CHEBI:29105"/>
        <label>2</label>
    </ligand>
</feature>
<feature type="binding site" evidence="1">
    <location>
        <position position="526"/>
    </location>
    <ligand>
        <name>Zn(2+)</name>
        <dbReference type="ChEBI" id="CHEBI:29105"/>
        <label>2</label>
    </ligand>
</feature>
<feature type="binding site" evidence="1">
    <location>
        <position position="539"/>
    </location>
    <ligand>
        <name>Zn(2+)</name>
        <dbReference type="ChEBI" id="CHEBI:29105"/>
        <label>2</label>
    </ligand>
</feature>
<feature type="binding site" evidence="1">
    <location>
        <position position="544"/>
    </location>
    <ligand>
        <name>Zn(2+)</name>
        <dbReference type="ChEBI" id="CHEBI:29105"/>
        <label>2</label>
    </ligand>
</feature>
<feature type="splice variant" id="VSP_007287" description="In isoform 3." evidence="7">
    <location>
        <begin position="234"/>
        <end position="388"/>
    </location>
</feature>
<feature type="splice variant" id="VSP_007288" description="In isoform 2." evidence="6">
    <original>SVLENDVQKPAGLPAEESD</original>
    <variation>WRCDCLGSTKPWVPSLVTT</variation>
    <location>
        <begin position="254"/>
        <end position="272"/>
    </location>
</feature>
<feature type="splice variant" id="VSP_007289" description="In isoform 2." evidence="6">
    <location>
        <begin position="273"/>
        <end position="643"/>
    </location>
</feature>
<feature type="splice variant" id="VSP_007290" description="In isoform 3." evidence="7">
    <original>TFKCLHCAFQGRDRADLLEHSRLHQADHPEKCPECSYSCSNPAALRVHSRVHCTDRPFKCDFCSFDTKRPSSLAKHIDKVHREGAKTENRAPPGKDGPGESGPHHVPNVSTQRAFGCDKCGASFVRDDSLRCHRKQHSDWGENKNSNLVTFPSEGIATGQLGPLV</original>
    <variation>SGNNFKCPHCDFLGDSKSTLRKHSRLHQSEHPEKCPECSYSCSSKAALRVHERIHCTERPFKCSYCSFDTKQPSNLSKHMKKFHADMLKNEAPEKKESGRQSSRQVARLDAKKTFHCDICDASFMREDSLRSHKRQHSEYHSKNSDVTVVQLHLEPSKQPLRPSP</variation>
    <location>
        <begin position="464"/>
        <end position="628"/>
    </location>
</feature>
<feature type="splice variant" id="VSP_007291" description="In isoform 3." evidence="7">
    <location>
        <begin position="629"/>
        <end position="643"/>
    </location>
</feature>
<feature type="sequence conflict" description="In Ref. 1; AAC53039." evidence="8" ref="1">
    <original>L</original>
    <variation>V</variation>
    <location>
        <position position="23"/>
    </location>
</feature>
<feature type="sequence conflict" description="In Ref. 1; AAC53039." evidence="8" ref="1">
    <original>T</original>
    <variation>A</variation>
    <location>
        <position position="410"/>
    </location>
</feature>
<feature type="sequence conflict" description="In Ref. 1; AAC53039." evidence="8" ref="1">
    <original>I</original>
    <variation>R</variation>
    <location>
        <position position="432"/>
    </location>
</feature>
<feature type="sequence conflict" description="In Ref. 1; AAC53039." evidence="8" ref="1">
    <original>D</original>
    <variation>N</variation>
    <location>
        <position position="446"/>
    </location>
</feature>
<feature type="sequence conflict" description="In Ref. 1; AAC53039." evidence="8" ref="1">
    <original>A</original>
    <variation>G</variation>
    <location>
        <position position="453"/>
    </location>
</feature>
<dbReference type="EMBL" id="U49046">
    <property type="protein sequence ID" value="AAC53039.1"/>
    <property type="molecule type" value="mRNA"/>
</dbReference>
<dbReference type="EMBL" id="AK010444">
    <property type="status" value="NOT_ANNOTATED_CDS"/>
    <property type="molecule type" value="mRNA"/>
</dbReference>
<dbReference type="EMBL" id="BC004695">
    <property type="protein sequence ID" value="AAH04695.1"/>
    <property type="molecule type" value="mRNA"/>
</dbReference>
<dbReference type="CCDS" id="CCDS89588.1">
    <molecule id="Q99KE8-1"/>
</dbReference>
<dbReference type="SMR" id="Q99KE8"/>
<dbReference type="FunCoup" id="Q99KE8">
    <property type="interactions" value="2829"/>
</dbReference>
<dbReference type="STRING" id="10090.ENSMUSP00000085285"/>
<dbReference type="iPTMnet" id="Q99KE8"/>
<dbReference type="PhosphoSitePlus" id="Q99KE8"/>
<dbReference type="PaxDb" id="10090-ENSMUSP00000085285"/>
<dbReference type="ProteomicsDB" id="275360">
    <molecule id="Q99KE8-1"/>
</dbReference>
<dbReference type="ProteomicsDB" id="275361">
    <molecule id="Q99KE8-2"/>
</dbReference>
<dbReference type="ProteomicsDB" id="275362">
    <molecule id="Q99KE8-3"/>
</dbReference>
<dbReference type="Antibodypedia" id="13873">
    <property type="antibodies" value="202 antibodies from 26 providers"/>
</dbReference>
<dbReference type="Ensembl" id="ENSMUST00000109161.3">
    <molecule id="Q99KE8-2"/>
    <property type="protein sequence ID" value="ENSMUSP00000104789.3"/>
    <property type="gene ID" value="ENSMUSG00000027551.16"/>
</dbReference>
<dbReference type="UCSC" id="uc008obl.1">
    <molecule id="Q99KE8-2"/>
    <property type="organism name" value="mouse"/>
</dbReference>
<dbReference type="AGR" id="MGI:107342"/>
<dbReference type="MGI" id="MGI:107342">
    <property type="gene designation" value="Zfp64"/>
</dbReference>
<dbReference type="VEuPathDB" id="HostDB:ENSMUSG00000027551"/>
<dbReference type="GeneTree" id="ENSGT00940000156405"/>
<dbReference type="HOGENOM" id="CLU_1022925_0_0_1"/>
<dbReference type="InParanoid" id="Q99KE8"/>
<dbReference type="PhylomeDB" id="Q99KE8"/>
<dbReference type="ChiTaRS" id="Zfp64">
    <property type="organism name" value="mouse"/>
</dbReference>
<dbReference type="PRO" id="PR:Q99KE8"/>
<dbReference type="Proteomes" id="UP000000589">
    <property type="component" value="Chromosome 2"/>
</dbReference>
<dbReference type="RNAct" id="Q99KE8">
    <property type="molecule type" value="protein"/>
</dbReference>
<dbReference type="Bgee" id="ENSMUSG00000027551">
    <property type="expression patterns" value="Expressed in ectoplacental cone and 210 other cell types or tissues"/>
</dbReference>
<dbReference type="ExpressionAtlas" id="Q99KE8">
    <property type="expression patterns" value="baseline and differential"/>
</dbReference>
<dbReference type="GO" id="GO:0005634">
    <property type="term" value="C:nucleus"/>
    <property type="evidence" value="ECO:0000314"/>
    <property type="project" value="UniProtKB"/>
</dbReference>
<dbReference type="GO" id="GO:0003677">
    <property type="term" value="F:DNA binding"/>
    <property type="evidence" value="ECO:0007669"/>
    <property type="project" value="UniProtKB-KW"/>
</dbReference>
<dbReference type="GO" id="GO:0008270">
    <property type="term" value="F:zinc ion binding"/>
    <property type="evidence" value="ECO:0007669"/>
    <property type="project" value="UniProtKB-KW"/>
</dbReference>
<dbReference type="GO" id="GO:0048762">
    <property type="term" value="P:mesenchymal cell differentiation"/>
    <property type="evidence" value="ECO:0000250"/>
    <property type="project" value="UniProtKB"/>
</dbReference>
<dbReference type="GO" id="GO:0048026">
    <property type="term" value="P:positive regulation of mRNA splicing, via spliceosome"/>
    <property type="evidence" value="ECO:0000315"/>
    <property type="project" value="MGI"/>
</dbReference>
<dbReference type="FunFam" id="3.30.160.60:FF:000255">
    <property type="entry name" value="Zinc finger and AT-hook domain containing"/>
    <property type="match status" value="1"/>
</dbReference>
<dbReference type="FunFam" id="3.30.160.60:FF:001662">
    <property type="entry name" value="Zinc finger protein 64"/>
    <property type="match status" value="1"/>
</dbReference>
<dbReference type="FunFam" id="3.30.160.60:FF:000223">
    <property type="entry name" value="zinc finger protein 64 isoform X1"/>
    <property type="match status" value="1"/>
</dbReference>
<dbReference type="FunFam" id="3.30.160.60:FF:000412">
    <property type="entry name" value="zinc finger protein 64 isoform X1"/>
    <property type="match status" value="1"/>
</dbReference>
<dbReference type="FunFam" id="3.30.160.60:FF:000578">
    <property type="entry name" value="zinc finger protein 64 isoform X1"/>
    <property type="match status" value="1"/>
</dbReference>
<dbReference type="FunFam" id="3.30.160.60:FF:000660">
    <property type="entry name" value="zinc finger protein 64 isoform X1"/>
    <property type="match status" value="1"/>
</dbReference>
<dbReference type="FunFam" id="3.30.160.60:FF:000669">
    <property type="entry name" value="zinc finger protein 64 isoform X1"/>
    <property type="match status" value="1"/>
</dbReference>
<dbReference type="FunFam" id="3.30.160.60:FF:001010">
    <property type="entry name" value="zinc finger protein 64 isoform X3"/>
    <property type="match status" value="2"/>
</dbReference>
<dbReference type="FunFam" id="3.30.160.60:FF:002037">
    <property type="entry name" value="zinc finger protein 64 isoform X3"/>
    <property type="match status" value="1"/>
</dbReference>
<dbReference type="Gene3D" id="3.30.160.60">
    <property type="entry name" value="Classic Zinc Finger"/>
    <property type="match status" value="11"/>
</dbReference>
<dbReference type="InterPro" id="IPR050636">
    <property type="entry name" value="C2H2-ZF_domain-containing"/>
</dbReference>
<dbReference type="InterPro" id="IPR036236">
    <property type="entry name" value="Znf_C2H2_sf"/>
</dbReference>
<dbReference type="InterPro" id="IPR013087">
    <property type="entry name" value="Znf_C2H2_type"/>
</dbReference>
<dbReference type="PANTHER" id="PTHR47772:SF13">
    <property type="entry name" value="GASTRULA ZINC FINGER PROTEIN XLCGF49.1-LIKE-RELATED"/>
    <property type="match status" value="1"/>
</dbReference>
<dbReference type="PANTHER" id="PTHR47772">
    <property type="entry name" value="ZINC FINGER PROTEIN 200"/>
    <property type="match status" value="1"/>
</dbReference>
<dbReference type="Pfam" id="PF00096">
    <property type="entry name" value="zf-C2H2"/>
    <property type="match status" value="9"/>
</dbReference>
<dbReference type="SMART" id="SM00355">
    <property type="entry name" value="ZnF_C2H2"/>
    <property type="match status" value="15"/>
</dbReference>
<dbReference type="SUPFAM" id="SSF57667">
    <property type="entry name" value="beta-beta-alpha zinc fingers"/>
    <property type="match status" value="7"/>
</dbReference>
<dbReference type="PROSITE" id="PS00028">
    <property type="entry name" value="ZINC_FINGER_C2H2_1"/>
    <property type="match status" value="6"/>
</dbReference>
<dbReference type="PROSITE" id="PS50157">
    <property type="entry name" value="ZINC_FINGER_C2H2_2"/>
    <property type="match status" value="12"/>
</dbReference>